<comment type="function">
    <text evidence="1">Required for accurate and efficient protein synthesis under certain stress conditions. May act as a fidelity factor of the translation reaction, by catalyzing a one-codon backward translocation of tRNAs on improperly translocated ribosomes. Back-translocation proceeds from a post-translocation (POST) complex to a pre-translocation (PRE) complex, thus giving elongation factor G a second chance to translocate the tRNAs correctly. Binds to ribosomes in a GTP-dependent manner.</text>
</comment>
<comment type="catalytic activity">
    <reaction evidence="1">
        <text>GTP + H2O = GDP + phosphate + H(+)</text>
        <dbReference type="Rhea" id="RHEA:19669"/>
        <dbReference type="ChEBI" id="CHEBI:15377"/>
        <dbReference type="ChEBI" id="CHEBI:15378"/>
        <dbReference type="ChEBI" id="CHEBI:37565"/>
        <dbReference type="ChEBI" id="CHEBI:43474"/>
        <dbReference type="ChEBI" id="CHEBI:58189"/>
        <dbReference type="EC" id="3.6.5.n1"/>
    </reaction>
</comment>
<comment type="subcellular location">
    <subcellularLocation>
        <location evidence="1">Cell membrane</location>
        <topology evidence="1">Peripheral membrane protein</topology>
        <orientation evidence="1">Cytoplasmic side</orientation>
    </subcellularLocation>
</comment>
<comment type="similarity">
    <text evidence="1">Belongs to the TRAFAC class translation factor GTPase superfamily. Classic translation factor GTPase family. LepA subfamily.</text>
</comment>
<keyword id="KW-1003">Cell membrane</keyword>
<keyword id="KW-0342">GTP-binding</keyword>
<keyword id="KW-0378">Hydrolase</keyword>
<keyword id="KW-0472">Membrane</keyword>
<keyword id="KW-0547">Nucleotide-binding</keyword>
<keyword id="KW-0648">Protein biosynthesis</keyword>
<keyword id="KW-1185">Reference proteome</keyword>
<name>LEPA_CLOAB</name>
<accession>Q97JJ6</accession>
<proteinExistence type="inferred from homology"/>
<feature type="chain" id="PRO_0000176261" description="Elongation factor 4">
    <location>
        <begin position="1"/>
        <end position="602"/>
    </location>
</feature>
<feature type="domain" description="tr-type G">
    <location>
        <begin position="7"/>
        <end position="190"/>
    </location>
</feature>
<feature type="binding site" evidence="1">
    <location>
        <begin position="19"/>
        <end position="24"/>
    </location>
    <ligand>
        <name>GTP</name>
        <dbReference type="ChEBI" id="CHEBI:37565"/>
    </ligand>
</feature>
<feature type="binding site" evidence="1">
    <location>
        <begin position="137"/>
        <end position="140"/>
    </location>
    <ligand>
        <name>GTP</name>
        <dbReference type="ChEBI" id="CHEBI:37565"/>
    </ligand>
</feature>
<reference key="1">
    <citation type="journal article" date="2001" name="J. Bacteriol.">
        <title>Genome sequence and comparative analysis of the solvent-producing bacterium Clostridium acetobutylicum.</title>
        <authorList>
            <person name="Noelling J."/>
            <person name="Breton G."/>
            <person name="Omelchenko M.V."/>
            <person name="Makarova K.S."/>
            <person name="Zeng Q."/>
            <person name="Gibson R."/>
            <person name="Lee H.M."/>
            <person name="Dubois J."/>
            <person name="Qiu D."/>
            <person name="Hitti J."/>
            <person name="Wolf Y.I."/>
            <person name="Tatusov R.L."/>
            <person name="Sabathe F."/>
            <person name="Doucette-Stamm L.A."/>
            <person name="Soucaille P."/>
            <person name="Daly M.J."/>
            <person name="Bennett G.N."/>
            <person name="Koonin E.V."/>
            <person name="Smith D.R."/>
        </authorList>
    </citation>
    <scope>NUCLEOTIDE SEQUENCE [LARGE SCALE GENOMIC DNA]</scope>
    <source>
        <strain>ATCC 824 / DSM 792 / JCM 1419 / IAM 19013 / LMG 5710 / NBRC 13948 / NRRL B-527 / VKM B-1787 / 2291 / W</strain>
    </source>
</reference>
<sequence length="602" mass="67612">MQSERQKHIRNFCIVAHIDHGKSTLADRLLEHTGTLTHREMEEQVLDNMEIERERGITIKSQAARLIYKRPEDGQEYILNLIDTPGHVDFNYEVSRSLAACEGAVLVVDATQGIQAQTLANCYMAVDHGLEVVPVINKIDLPSARPDEIKNEIEDVIGIESSDAPLISAKTGLNIEDVLEAVVQKVPAPSGDEKGPLKALIFDSYYDSYKGVVCHIRIKDGTVKAGTRIKLMAANKEYEVIEVGVFVPNYLKVEELKAGDVGYITASIKNVRDARVGDTITEVNNPAKEPLLGYRPAISMVYSGIYPIDSSKYEELKEALEKLQVNDAALNFEPETSIALGFGFRCGFLGLLHMEIMQERIEKEFNLDVIMTAPSVIYKVKKTDGTLIEITNPTNLPEPTEIDYMEEPVVKAQIITPSDFVGAVMELCQNKRGTFIDMEYIETTRVMLNYRVPLNEIIYDFFDSLKSRTKGYASFDYELDGYMRTELVKLDIILNSEVVDALSMIVPKDRAYAKGRTMAEKLKEIIPRQLFEIPIQAAVGSKIIARETVKALRKDVLAKCYGGDISRKRKLLEKQKEGKKRMRQVGSVEVPQEAFMSILKND</sequence>
<dbReference type="EC" id="3.6.5.n1" evidence="1"/>
<dbReference type="EMBL" id="AE001437">
    <property type="protein sequence ID" value="AAK79249.1"/>
    <property type="molecule type" value="Genomic_DNA"/>
</dbReference>
<dbReference type="PIR" id="F97057">
    <property type="entry name" value="F97057"/>
</dbReference>
<dbReference type="RefSeq" id="NP_347909.1">
    <property type="nucleotide sequence ID" value="NC_003030.1"/>
</dbReference>
<dbReference type="RefSeq" id="WP_010964590.1">
    <property type="nucleotide sequence ID" value="NC_003030.1"/>
</dbReference>
<dbReference type="SMR" id="Q97JJ6"/>
<dbReference type="STRING" id="272562.CA_C1278"/>
<dbReference type="GeneID" id="44997784"/>
<dbReference type="KEGG" id="cac:CA_C1278"/>
<dbReference type="PATRIC" id="fig|272562.8.peg.1479"/>
<dbReference type="eggNOG" id="COG0481">
    <property type="taxonomic scope" value="Bacteria"/>
</dbReference>
<dbReference type="HOGENOM" id="CLU_009995_3_3_9"/>
<dbReference type="OrthoDB" id="9804431at2"/>
<dbReference type="Proteomes" id="UP000000814">
    <property type="component" value="Chromosome"/>
</dbReference>
<dbReference type="GO" id="GO:0005886">
    <property type="term" value="C:plasma membrane"/>
    <property type="evidence" value="ECO:0007669"/>
    <property type="project" value="UniProtKB-SubCell"/>
</dbReference>
<dbReference type="GO" id="GO:0005525">
    <property type="term" value="F:GTP binding"/>
    <property type="evidence" value="ECO:0007669"/>
    <property type="project" value="UniProtKB-UniRule"/>
</dbReference>
<dbReference type="GO" id="GO:0003924">
    <property type="term" value="F:GTPase activity"/>
    <property type="evidence" value="ECO:0007669"/>
    <property type="project" value="UniProtKB-UniRule"/>
</dbReference>
<dbReference type="GO" id="GO:0043022">
    <property type="term" value="F:ribosome binding"/>
    <property type="evidence" value="ECO:0007669"/>
    <property type="project" value="UniProtKB-UniRule"/>
</dbReference>
<dbReference type="GO" id="GO:0003746">
    <property type="term" value="F:translation elongation factor activity"/>
    <property type="evidence" value="ECO:0007669"/>
    <property type="project" value="UniProtKB-UniRule"/>
</dbReference>
<dbReference type="GO" id="GO:0045727">
    <property type="term" value="P:positive regulation of translation"/>
    <property type="evidence" value="ECO:0007669"/>
    <property type="project" value="UniProtKB-UniRule"/>
</dbReference>
<dbReference type="CDD" id="cd03699">
    <property type="entry name" value="EF4_II"/>
    <property type="match status" value="1"/>
</dbReference>
<dbReference type="CDD" id="cd16260">
    <property type="entry name" value="EF4_III"/>
    <property type="match status" value="1"/>
</dbReference>
<dbReference type="CDD" id="cd01890">
    <property type="entry name" value="LepA"/>
    <property type="match status" value="1"/>
</dbReference>
<dbReference type="CDD" id="cd03709">
    <property type="entry name" value="lepA_C"/>
    <property type="match status" value="1"/>
</dbReference>
<dbReference type="FunFam" id="3.40.50.300:FF:000078">
    <property type="entry name" value="Elongation factor 4"/>
    <property type="match status" value="1"/>
</dbReference>
<dbReference type="FunFam" id="2.40.30.10:FF:000015">
    <property type="entry name" value="Translation factor GUF1, mitochondrial"/>
    <property type="match status" value="1"/>
</dbReference>
<dbReference type="FunFam" id="3.30.70.240:FF:000007">
    <property type="entry name" value="Translation factor GUF1, mitochondrial"/>
    <property type="match status" value="1"/>
</dbReference>
<dbReference type="FunFam" id="3.30.70.2570:FF:000001">
    <property type="entry name" value="Translation factor GUF1, mitochondrial"/>
    <property type="match status" value="1"/>
</dbReference>
<dbReference type="FunFam" id="3.30.70.870:FF:000004">
    <property type="entry name" value="Translation factor GUF1, mitochondrial"/>
    <property type="match status" value="1"/>
</dbReference>
<dbReference type="Gene3D" id="3.30.70.240">
    <property type="match status" value="1"/>
</dbReference>
<dbReference type="Gene3D" id="3.30.70.2570">
    <property type="entry name" value="Elongation factor 4, C-terminal domain"/>
    <property type="match status" value="1"/>
</dbReference>
<dbReference type="Gene3D" id="3.30.70.870">
    <property type="entry name" value="Elongation Factor G (Translational Gtpase), domain 3"/>
    <property type="match status" value="1"/>
</dbReference>
<dbReference type="Gene3D" id="3.40.50.300">
    <property type="entry name" value="P-loop containing nucleotide triphosphate hydrolases"/>
    <property type="match status" value="1"/>
</dbReference>
<dbReference type="Gene3D" id="2.40.30.10">
    <property type="entry name" value="Translation factors"/>
    <property type="match status" value="1"/>
</dbReference>
<dbReference type="HAMAP" id="MF_00071">
    <property type="entry name" value="LepA"/>
    <property type="match status" value="1"/>
</dbReference>
<dbReference type="InterPro" id="IPR006297">
    <property type="entry name" value="EF-4"/>
</dbReference>
<dbReference type="InterPro" id="IPR035647">
    <property type="entry name" value="EFG_III/V"/>
</dbReference>
<dbReference type="InterPro" id="IPR000640">
    <property type="entry name" value="EFG_V-like"/>
</dbReference>
<dbReference type="InterPro" id="IPR004161">
    <property type="entry name" value="EFTu-like_2"/>
</dbReference>
<dbReference type="InterPro" id="IPR031157">
    <property type="entry name" value="G_TR_CS"/>
</dbReference>
<dbReference type="InterPro" id="IPR038363">
    <property type="entry name" value="LepA_C_sf"/>
</dbReference>
<dbReference type="InterPro" id="IPR013842">
    <property type="entry name" value="LepA_CTD"/>
</dbReference>
<dbReference type="InterPro" id="IPR035654">
    <property type="entry name" value="LepA_IV"/>
</dbReference>
<dbReference type="InterPro" id="IPR027417">
    <property type="entry name" value="P-loop_NTPase"/>
</dbReference>
<dbReference type="InterPro" id="IPR005225">
    <property type="entry name" value="Small_GTP-bd"/>
</dbReference>
<dbReference type="InterPro" id="IPR000795">
    <property type="entry name" value="T_Tr_GTP-bd_dom"/>
</dbReference>
<dbReference type="InterPro" id="IPR009000">
    <property type="entry name" value="Transl_B-barrel_sf"/>
</dbReference>
<dbReference type="NCBIfam" id="TIGR01393">
    <property type="entry name" value="lepA"/>
    <property type="match status" value="1"/>
</dbReference>
<dbReference type="NCBIfam" id="TIGR00231">
    <property type="entry name" value="small_GTP"/>
    <property type="match status" value="1"/>
</dbReference>
<dbReference type="PANTHER" id="PTHR43512:SF4">
    <property type="entry name" value="TRANSLATION FACTOR GUF1 HOMOLOG, CHLOROPLASTIC"/>
    <property type="match status" value="1"/>
</dbReference>
<dbReference type="PANTHER" id="PTHR43512">
    <property type="entry name" value="TRANSLATION FACTOR GUF1-RELATED"/>
    <property type="match status" value="1"/>
</dbReference>
<dbReference type="Pfam" id="PF00679">
    <property type="entry name" value="EFG_C"/>
    <property type="match status" value="1"/>
</dbReference>
<dbReference type="Pfam" id="PF00009">
    <property type="entry name" value="GTP_EFTU"/>
    <property type="match status" value="1"/>
</dbReference>
<dbReference type="Pfam" id="PF03144">
    <property type="entry name" value="GTP_EFTU_D2"/>
    <property type="match status" value="1"/>
</dbReference>
<dbReference type="Pfam" id="PF06421">
    <property type="entry name" value="LepA_C"/>
    <property type="match status" value="1"/>
</dbReference>
<dbReference type="PRINTS" id="PR00315">
    <property type="entry name" value="ELONGATNFCT"/>
</dbReference>
<dbReference type="SMART" id="SM00838">
    <property type="entry name" value="EFG_C"/>
    <property type="match status" value="1"/>
</dbReference>
<dbReference type="SUPFAM" id="SSF54980">
    <property type="entry name" value="EF-G C-terminal domain-like"/>
    <property type="match status" value="2"/>
</dbReference>
<dbReference type="SUPFAM" id="SSF52540">
    <property type="entry name" value="P-loop containing nucleoside triphosphate hydrolases"/>
    <property type="match status" value="1"/>
</dbReference>
<dbReference type="SUPFAM" id="SSF50447">
    <property type="entry name" value="Translation proteins"/>
    <property type="match status" value="1"/>
</dbReference>
<dbReference type="PROSITE" id="PS00301">
    <property type="entry name" value="G_TR_1"/>
    <property type="match status" value="1"/>
</dbReference>
<dbReference type="PROSITE" id="PS51722">
    <property type="entry name" value="G_TR_2"/>
    <property type="match status" value="1"/>
</dbReference>
<evidence type="ECO:0000255" key="1">
    <source>
        <dbReference type="HAMAP-Rule" id="MF_00071"/>
    </source>
</evidence>
<gene>
    <name evidence="1" type="primary">lepA</name>
    <name type="ordered locus">CA_C1278</name>
</gene>
<organism>
    <name type="scientific">Clostridium acetobutylicum (strain ATCC 824 / DSM 792 / JCM 1419 / IAM 19013 / LMG 5710 / NBRC 13948 / NRRL B-527 / VKM B-1787 / 2291 / W)</name>
    <dbReference type="NCBI Taxonomy" id="272562"/>
    <lineage>
        <taxon>Bacteria</taxon>
        <taxon>Bacillati</taxon>
        <taxon>Bacillota</taxon>
        <taxon>Clostridia</taxon>
        <taxon>Eubacteriales</taxon>
        <taxon>Clostridiaceae</taxon>
        <taxon>Clostridium</taxon>
    </lineage>
</organism>
<protein>
    <recommendedName>
        <fullName evidence="1">Elongation factor 4</fullName>
        <shortName evidence="1">EF-4</shortName>
        <ecNumber evidence="1">3.6.5.n1</ecNumber>
    </recommendedName>
    <alternativeName>
        <fullName evidence="1">Ribosomal back-translocase LepA</fullName>
    </alternativeName>
</protein>